<evidence type="ECO:0000255" key="1">
    <source>
        <dbReference type="HAMAP-Rule" id="MF_00515"/>
    </source>
</evidence>
<comment type="function">
    <text evidence="1">Catalyzes the oxidative demethylation of N-methyl-L-tryptophan.</text>
</comment>
<comment type="catalytic activity">
    <reaction evidence="1">
        <text>N(alpha)-methyl-L-tryptophan + O2 + H2O = L-tryptophan + formaldehyde + H2O2</text>
        <dbReference type="Rhea" id="RHEA:28006"/>
        <dbReference type="ChEBI" id="CHEBI:15377"/>
        <dbReference type="ChEBI" id="CHEBI:15379"/>
        <dbReference type="ChEBI" id="CHEBI:16240"/>
        <dbReference type="ChEBI" id="CHEBI:16842"/>
        <dbReference type="ChEBI" id="CHEBI:57283"/>
        <dbReference type="ChEBI" id="CHEBI:57912"/>
    </reaction>
</comment>
<comment type="cofactor">
    <cofactor evidence="1">
        <name>FAD</name>
        <dbReference type="ChEBI" id="CHEBI:57692"/>
    </cofactor>
    <text evidence="1">Binds 1 FAD per subunit.</text>
</comment>
<comment type="subunit">
    <text evidence="1">Monomer.</text>
</comment>
<comment type="similarity">
    <text evidence="1">Belongs to the MSOX/MTOX family. MTOX subfamily.</text>
</comment>
<protein>
    <recommendedName>
        <fullName evidence="1">N-methyl-L-tryptophan oxidase</fullName>
        <shortName evidence="1">MTOX</shortName>
        <ecNumber evidence="1">1.5.3.-</ecNumber>
    </recommendedName>
</protein>
<reference key="1">
    <citation type="submission" date="2008-04" db="EMBL/GenBank/DDBJ databases">
        <title>Complete sequence of Yersinia pseudotuberculosis PB1/+.</title>
        <authorList>
            <person name="Copeland A."/>
            <person name="Lucas S."/>
            <person name="Lapidus A."/>
            <person name="Glavina del Rio T."/>
            <person name="Dalin E."/>
            <person name="Tice H."/>
            <person name="Bruce D."/>
            <person name="Goodwin L."/>
            <person name="Pitluck S."/>
            <person name="Munk A.C."/>
            <person name="Brettin T."/>
            <person name="Detter J.C."/>
            <person name="Han C."/>
            <person name="Tapia R."/>
            <person name="Schmutz J."/>
            <person name="Larimer F."/>
            <person name="Land M."/>
            <person name="Hauser L."/>
            <person name="Challacombe J.F."/>
            <person name="Green L."/>
            <person name="Lindler L.E."/>
            <person name="Nikolich M.P."/>
            <person name="Richardson P."/>
        </authorList>
    </citation>
    <scope>NUCLEOTIDE SEQUENCE [LARGE SCALE GENOMIC DNA]</scope>
    <source>
        <strain>PB1/+</strain>
    </source>
</reference>
<gene>
    <name evidence="1" type="primary">solA</name>
    <name type="ordered locus">YPTS_2573</name>
</gene>
<keyword id="KW-0274">FAD</keyword>
<keyword id="KW-0285">Flavoprotein</keyword>
<keyword id="KW-0560">Oxidoreductase</keyword>
<accession>B2K770</accession>
<proteinExistence type="inferred from homology"/>
<organism>
    <name type="scientific">Yersinia pseudotuberculosis serotype IB (strain PB1/+)</name>
    <dbReference type="NCBI Taxonomy" id="502801"/>
    <lineage>
        <taxon>Bacteria</taxon>
        <taxon>Pseudomonadati</taxon>
        <taxon>Pseudomonadota</taxon>
        <taxon>Gammaproteobacteria</taxon>
        <taxon>Enterobacterales</taxon>
        <taxon>Yersiniaceae</taxon>
        <taxon>Yersinia</taxon>
    </lineage>
</organism>
<sequence>MDYDLIVIGSGSVGSAAGYYASQAGLNVLMIDSAMPPHQAGSHHGETRIMRHAYGEGEKYVPLVLRAQALWDQLAAQTGEKLFQACGVINLGPDNSTFLQNVQRSAQQYDLPVETLNSTQIREKWPVFTVPDNYIAVFEPQSGYLRSELAVKTLIKAVTEAGCGILFNCPVTAIESHQAGVDVVTIDGTYSATKVVVTAGTWVKELLPTLPVTPVRKVFSWHQADGRYSEANHFPAFTVEMPDNILYYGFPAQNDALKLGKHHGGQLIESAAQRKPFGRYAEDGTEVFSFLRHFLPGVGVCLRGEACSYDMSPDEDFIIDTLPEDERVMVVSGLSGHGFKFATALGEVAALFAQDKPSPIDISAFSLARFR</sequence>
<feature type="chain" id="PRO_1000127451" description="N-methyl-L-tryptophan oxidase">
    <location>
        <begin position="1"/>
        <end position="371"/>
    </location>
</feature>
<feature type="binding site" evidence="1">
    <location>
        <begin position="4"/>
        <end position="34"/>
    </location>
    <ligand>
        <name>FAD</name>
        <dbReference type="ChEBI" id="CHEBI:57692"/>
    </ligand>
</feature>
<feature type="modified residue" description="S-8alpha-FAD cysteine" evidence="1">
    <location>
        <position position="307"/>
    </location>
</feature>
<dbReference type="EC" id="1.5.3.-" evidence="1"/>
<dbReference type="EMBL" id="CP001048">
    <property type="protein sequence ID" value="ACC89533.1"/>
    <property type="molecule type" value="Genomic_DNA"/>
</dbReference>
<dbReference type="RefSeq" id="WP_002211850.1">
    <property type="nucleotide sequence ID" value="NZ_CP009780.1"/>
</dbReference>
<dbReference type="SMR" id="B2K770"/>
<dbReference type="GeneID" id="57976231"/>
<dbReference type="KEGG" id="ypb:YPTS_2573"/>
<dbReference type="PATRIC" id="fig|502801.10.peg.1984"/>
<dbReference type="GO" id="GO:0005829">
    <property type="term" value="C:cytosol"/>
    <property type="evidence" value="ECO:0007669"/>
    <property type="project" value="TreeGrafter"/>
</dbReference>
<dbReference type="GO" id="GO:0050660">
    <property type="term" value="F:flavin adenine dinucleotide binding"/>
    <property type="evidence" value="ECO:0007669"/>
    <property type="project" value="InterPro"/>
</dbReference>
<dbReference type="GO" id="GO:0050131">
    <property type="term" value="F:N-methyl-L-amino-acid oxidase activity"/>
    <property type="evidence" value="ECO:0007669"/>
    <property type="project" value="InterPro"/>
</dbReference>
<dbReference type="GO" id="GO:0008115">
    <property type="term" value="F:sarcosine oxidase activity"/>
    <property type="evidence" value="ECO:0007669"/>
    <property type="project" value="TreeGrafter"/>
</dbReference>
<dbReference type="Gene3D" id="3.30.9.10">
    <property type="entry name" value="D-Amino Acid Oxidase, subunit A, domain 2"/>
    <property type="match status" value="1"/>
</dbReference>
<dbReference type="Gene3D" id="3.50.50.60">
    <property type="entry name" value="FAD/NAD(P)-binding domain"/>
    <property type="match status" value="1"/>
</dbReference>
<dbReference type="HAMAP" id="MF_00515">
    <property type="entry name" value="MTOX"/>
    <property type="match status" value="1"/>
</dbReference>
<dbReference type="InterPro" id="IPR006076">
    <property type="entry name" value="FAD-dep_OxRdtase"/>
</dbReference>
<dbReference type="InterPro" id="IPR036188">
    <property type="entry name" value="FAD/NAD-bd_sf"/>
</dbReference>
<dbReference type="InterPro" id="IPR023493">
    <property type="entry name" value="Me_Trp_Oxase_MTOX"/>
</dbReference>
<dbReference type="InterPro" id="IPR045170">
    <property type="entry name" value="MTOX"/>
</dbReference>
<dbReference type="NCBIfam" id="NF008425">
    <property type="entry name" value="PRK11259.1"/>
    <property type="match status" value="1"/>
</dbReference>
<dbReference type="PANTHER" id="PTHR10961:SF7">
    <property type="entry name" value="FAD DEPENDENT OXIDOREDUCTASE DOMAIN-CONTAINING PROTEIN"/>
    <property type="match status" value="1"/>
</dbReference>
<dbReference type="PANTHER" id="PTHR10961">
    <property type="entry name" value="PEROXISOMAL SARCOSINE OXIDASE"/>
    <property type="match status" value="1"/>
</dbReference>
<dbReference type="Pfam" id="PF01266">
    <property type="entry name" value="DAO"/>
    <property type="match status" value="1"/>
</dbReference>
<dbReference type="SUPFAM" id="SSF54373">
    <property type="entry name" value="FAD-linked reductases, C-terminal domain"/>
    <property type="match status" value="1"/>
</dbReference>
<dbReference type="SUPFAM" id="SSF51905">
    <property type="entry name" value="FAD/NAD(P)-binding domain"/>
    <property type="match status" value="1"/>
</dbReference>
<name>MTOX_YERPB</name>